<gene>
    <name type="primary">Ssb-c31a</name>
    <name type="ORF">CG8396</name>
</gene>
<dbReference type="EMBL" id="U18971">
    <property type="protein sequence ID" value="AAC46989.1"/>
    <property type="status" value="ALT_FRAME"/>
    <property type="molecule type" value="mRNA"/>
</dbReference>
<dbReference type="EMBL" id="AE014134">
    <property type="protein sequence ID" value="AAF52619.1"/>
    <property type="molecule type" value="Genomic_DNA"/>
</dbReference>
<dbReference type="EMBL" id="BT023261">
    <property type="protein sequence ID" value="AAY55677.1"/>
    <property type="molecule type" value="mRNA"/>
</dbReference>
<dbReference type="PIR" id="S66164">
    <property type="entry name" value="S66164"/>
</dbReference>
<dbReference type="RefSeq" id="NP_477136.1">
    <property type="nucleotide sequence ID" value="NM_057788.4"/>
</dbReference>
<dbReference type="SMR" id="Q9VLR5"/>
<dbReference type="BioGRID" id="60249">
    <property type="interactions" value="26"/>
</dbReference>
<dbReference type="FunCoup" id="Q9VLR5">
    <property type="interactions" value="1423"/>
</dbReference>
<dbReference type="IntAct" id="Q9VLR5">
    <property type="interactions" value="19"/>
</dbReference>
<dbReference type="STRING" id="7227.FBpp0079211"/>
<dbReference type="PaxDb" id="7227-FBpp0079211"/>
<dbReference type="DNASU" id="34120"/>
<dbReference type="EnsemblMetazoa" id="FBtr0079590">
    <property type="protein sequence ID" value="FBpp0079211"/>
    <property type="gene ID" value="FBgn0015299"/>
</dbReference>
<dbReference type="GeneID" id="34120"/>
<dbReference type="KEGG" id="dme:Dmel_CG8396"/>
<dbReference type="AGR" id="FB:FBgn0015299"/>
<dbReference type="CTD" id="34120"/>
<dbReference type="FlyBase" id="FBgn0015299">
    <property type="gene designation" value="Ssb-c31a"/>
</dbReference>
<dbReference type="VEuPathDB" id="VectorBase:FBgn0015299"/>
<dbReference type="eggNOG" id="KOG2712">
    <property type="taxonomic scope" value="Eukaryota"/>
</dbReference>
<dbReference type="GeneTree" id="ENSGT00940000166509"/>
<dbReference type="HOGENOM" id="CLU_104273_1_2_1"/>
<dbReference type="InParanoid" id="Q9VLR5"/>
<dbReference type="OMA" id="TMDQWNV"/>
<dbReference type="OrthoDB" id="2505440at2759"/>
<dbReference type="PhylomeDB" id="Q9VLR5"/>
<dbReference type="SignaLink" id="Q9VLR5"/>
<dbReference type="BioGRID-ORCS" id="34120">
    <property type="hits" value="0 hits in 1 CRISPR screen"/>
</dbReference>
<dbReference type="GenomeRNAi" id="34120"/>
<dbReference type="PRO" id="PR:Q9VLR5"/>
<dbReference type="Proteomes" id="UP000000803">
    <property type="component" value="Chromosome 2L"/>
</dbReference>
<dbReference type="Bgee" id="FBgn0015299">
    <property type="expression patterns" value="Expressed in adult middle midgut class I enteroendocrine cell in adult midgut (Drosophila) and 127 other cell types or tissues"/>
</dbReference>
<dbReference type="ExpressionAtlas" id="Q9VLR5">
    <property type="expression patterns" value="baseline and differential"/>
</dbReference>
<dbReference type="GO" id="GO:0005634">
    <property type="term" value="C:nucleus"/>
    <property type="evidence" value="ECO:0000314"/>
    <property type="project" value="FlyBase"/>
</dbReference>
<dbReference type="GO" id="GO:0005667">
    <property type="term" value="C:transcription regulator complex"/>
    <property type="evidence" value="ECO:0000318"/>
    <property type="project" value="GO_Central"/>
</dbReference>
<dbReference type="GO" id="GO:0003697">
    <property type="term" value="F:single-stranded DNA binding"/>
    <property type="evidence" value="ECO:0000314"/>
    <property type="project" value="FlyBase"/>
</dbReference>
<dbReference type="GO" id="GO:0003713">
    <property type="term" value="F:transcription coactivator activity"/>
    <property type="evidence" value="ECO:0000318"/>
    <property type="project" value="GO_Central"/>
</dbReference>
<dbReference type="GO" id="GO:0045892">
    <property type="term" value="P:negative regulation of DNA-templated transcription"/>
    <property type="evidence" value="ECO:0000314"/>
    <property type="project" value="FlyBase"/>
</dbReference>
<dbReference type="GO" id="GO:0060261">
    <property type="term" value="P:positive regulation of transcription initiation by RNA polymerase II"/>
    <property type="evidence" value="ECO:0007669"/>
    <property type="project" value="InterPro"/>
</dbReference>
<dbReference type="Gene3D" id="2.30.31.10">
    <property type="entry name" value="Transcriptional Coactivator Pc4, Chain A"/>
    <property type="match status" value="1"/>
</dbReference>
<dbReference type="InterPro" id="IPR003173">
    <property type="entry name" value="PC4_C"/>
</dbReference>
<dbReference type="InterPro" id="IPR009044">
    <property type="entry name" value="ssDNA-bd_transcriptional_reg"/>
</dbReference>
<dbReference type="InterPro" id="IPR045125">
    <property type="entry name" value="Sub1/Tcp4-like"/>
</dbReference>
<dbReference type="PANTHER" id="PTHR13215">
    <property type="entry name" value="RNA POLYMERASE II TRANSCRIPTIONAL COACTIVATOR"/>
    <property type="match status" value="1"/>
</dbReference>
<dbReference type="Pfam" id="PF02229">
    <property type="entry name" value="PC4"/>
    <property type="match status" value="1"/>
</dbReference>
<dbReference type="SUPFAM" id="SSF54447">
    <property type="entry name" value="ssDNA-binding transcriptional regulator domain"/>
    <property type="match status" value="1"/>
</dbReference>
<sequence>MPKTKKKDSSSDSDSGPDDRIKPASKKAKESDAPNSDPKDSGENGATSWTLEGLRQVRINEFRGRKSVDIREFYDKGGQILPGKKGISLSLIQWKKLLEVAEEVTRAIEN</sequence>
<feature type="chain" id="PRO_0000215946" description="RNA polymerase II transcriptional coactivator">
    <location>
        <begin position="1"/>
        <end position="110"/>
    </location>
</feature>
<feature type="region of interest" description="Disordered" evidence="2">
    <location>
        <begin position="1"/>
        <end position="50"/>
    </location>
</feature>
<feature type="compositionally biased region" description="Basic and acidic residues" evidence="2">
    <location>
        <begin position="17"/>
        <end position="42"/>
    </location>
</feature>
<name>TCP4_DROME</name>
<comment type="function">
    <text evidence="1 3">General coactivator that functions cooperatively with TAFs and mediates functional interactions between upstream activators and the general transcriptional machinery. Binds single-stranded DNA (By similarity). Binds specifically to the NssBF element, a short nucleotide sequence of the 1731 retrotransposon, to repress promoter activity.</text>
</comment>
<comment type="subcellular location">
    <subcellularLocation>
        <location evidence="3">Nucleus</location>
    </subcellularLocation>
</comment>
<comment type="developmental stage">
    <text evidence="3">Expressed both maternally and zygotically, no expression is seen in larvae and weak expression in pupae.</text>
</comment>
<comment type="similarity">
    <text evidence="4">Belongs to the transcriptional coactivator PC4 family.</text>
</comment>
<comment type="sequence caution" evidence="4">
    <conflict type="frameshift">
        <sequence resource="EMBL-CDS" id="AAC46989"/>
    </conflict>
</comment>
<accession>Q9VLR5</accession>
<accession>Q24026</accession>
<accession>Q4V3U5</accession>
<reference key="1">
    <citation type="journal article" date="1995" name="Nucleic Acids Res.">
        <title>Characterization and cloning of p11, a transrepressor of Drosophila melanogaster retrotransposon 1731.</title>
        <authorList>
            <person name="Lacoste J."/>
            <person name="Codani-Simonart S."/>
            <person name="Best-Belpomme M."/>
            <person name="Peronnet F."/>
        </authorList>
    </citation>
    <scope>NUCLEOTIDE SEQUENCE [MRNA]</scope>
    <scope>FUNCTION</scope>
    <scope>SUBCELLULAR LOCATION</scope>
    <scope>DEVELOPMENTAL STAGE</scope>
    <source>
        <tissue>Embryo</tissue>
    </source>
</reference>
<reference key="2">
    <citation type="journal article" date="2000" name="Science">
        <title>The genome sequence of Drosophila melanogaster.</title>
        <authorList>
            <person name="Adams M.D."/>
            <person name="Celniker S.E."/>
            <person name="Holt R.A."/>
            <person name="Evans C.A."/>
            <person name="Gocayne J.D."/>
            <person name="Amanatides P.G."/>
            <person name="Scherer S.E."/>
            <person name="Li P.W."/>
            <person name="Hoskins R.A."/>
            <person name="Galle R.F."/>
            <person name="George R.A."/>
            <person name="Lewis S.E."/>
            <person name="Richards S."/>
            <person name="Ashburner M."/>
            <person name="Henderson S.N."/>
            <person name="Sutton G.G."/>
            <person name="Wortman J.R."/>
            <person name="Yandell M.D."/>
            <person name="Zhang Q."/>
            <person name="Chen L.X."/>
            <person name="Brandon R.C."/>
            <person name="Rogers Y.-H.C."/>
            <person name="Blazej R.G."/>
            <person name="Champe M."/>
            <person name="Pfeiffer B.D."/>
            <person name="Wan K.H."/>
            <person name="Doyle C."/>
            <person name="Baxter E.G."/>
            <person name="Helt G."/>
            <person name="Nelson C.R."/>
            <person name="Miklos G.L.G."/>
            <person name="Abril J.F."/>
            <person name="Agbayani A."/>
            <person name="An H.-J."/>
            <person name="Andrews-Pfannkoch C."/>
            <person name="Baldwin D."/>
            <person name="Ballew R.M."/>
            <person name="Basu A."/>
            <person name="Baxendale J."/>
            <person name="Bayraktaroglu L."/>
            <person name="Beasley E.M."/>
            <person name="Beeson K.Y."/>
            <person name="Benos P.V."/>
            <person name="Berman B.P."/>
            <person name="Bhandari D."/>
            <person name="Bolshakov S."/>
            <person name="Borkova D."/>
            <person name="Botchan M.R."/>
            <person name="Bouck J."/>
            <person name="Brokstein P."/>
            <person name="Brottier P."/>
            <person name="Burtis K.C."/>
            <person name="Busam D.A."/>
            <person name="Butler H."/>
            <person name="Cadieu E."/>
            <person name="Center A."/>
            <person name="Chandra I."/>
            <person name="Cherry J.M."/>
            <person name="Cawley S."/>
            <person name="Dahlke C."/>
            <person name="Davenport L.B."/>
            <person name="Davies P."/>
            <person name="de Pablos B."/>
            <person name="Delcher A."/>
            <person name="Deng Z."/>
            <person name="Mays A.D."/>
            <person name="Dew I."/>
            <person name="Dietz S.M."/>
            <person name="Dodson K."/>
            <person name="Doup L.E."/>
            <person name="Downes M."/>
            <person name="Dugan-Rocha S."/>
            <person name="Dunkov B.C."/>
            <person name="Dunn P."/>
            <person name="Durbin K.J."/>
            <person name="Evangelista C.C."/>
            <person name="Ferraz C."/>
            <person name="Ferriera S."/>
            <person name="Fleischmann W."/>
            <person name="Fosler C."/>
            <person name="Gabrielian A.E."/>
            <person name="Garg N.S."/>
            <person name="Gelbart W.M."/>
            <person name="Glasser K."/>
            <person name="Glodek A."/>
            <person name="Gong F."/>
            <person name="Gorrell J.H."/>
            <person name="Gu Z."/>
            <person name="Guan P."/>
            <person name="Harris M."/>
            <person name="Harris N.L."/>
            <person name="Harvey D.A."/>
            <person name="Heiman T.J."/>
            <person name="Hernandez J.R."/>
            <person name="Houck J."/>
            <person name="Hostin D."/>
            <person name="Houston K.A."/>
            <person name="Howland T.J."/>
            <person name="Wei M.-H."/>
            <person name="Ibegwam C."/>
            <person name="Jalali M."/>
            <person name="Kalush F."/>
            <person name="Karpen G.H."/>
            <person name="Ke Z."/>
            <person name="Kennison J.A."/>
            <person name="Ketchum K.A."/>
            <person name="Kimmel B.E."/>
            <person name="Kodira C.D."/>
            <person name="Kraft C.L."/>
            <person name="Kravitz S."/>
            <person name="Kulp D."/>
            <person name="Lai Z."/>
            <person name="Lasko P."/>
            <person name="Lei Y."/>
            <person name="Levitsky A.A."/>
            <person name="Li J.H."/>
            <person name="Li Z."/>
            <person name="Liang Y."/>
            <person name="Lin X."/>
            <person name="Liu X."/>
            <person name="Mattei B."/>
            <person name="McIntosh T.C."/>
            <person name="McLeod M.P."/>
            <person name="McPherson D."/>
            <person name="Merkulov G."/>
            <person name="Milshina N.V."/>
            <person name="Mobarry C."/>
            <person name="Morris J."/>
            <person name="Moshrefi A."/>
            <person name="Mount S.M."/>
            <person name="Moy M."/>
            <person name="Murphy B."/>
            <person name="Murphy L."/>
            <person name="Muzny D.M."/>
            <person name="Nelson D.L."/>
            <person name="Nelson D.R."/>
            <person name="Nelson K.A."/>
            <person name="Nixon K."/>
            <person name="Nusskern D.R."/>
            <person name="Pacleb J.M."/>
            <person name="Palazzolo M."/>
            <person name="Pittman G.S."/>
            <person name="Pan S."/>
            <person name="Pollard J."/>
            <person name="Puri V."/>
            <person name="Reese M.G."/>
            <person name="Reinert K."/>
            <person name="Remington K."/>
            <person name="Saunders R.D.C."/>
            <person name="Scheeler F."/>
            <person name="Shen H."/>
            <person name="Shue B.C."/>
            <person name="Siden-Kiamos I."/>
            <person name="Simpson M."/>
            <person name="Skupski M.P."/>
            <person name="Smith T.J."/>
            <person name="Spier E."/>
            <person name="Spradling A.C."/>
            <person name="Stapleton M."/>
            <person name="Strong R."/>
            <person name="Sun E."/>
            <person name="Svirskas R."/>
            <person name="Tector C."/>
            <person name="Turner R."/>
            <person name="Venter E."/>
            <person name="Wang A.H."/>
            <person name="Wang X."/>
            <person name="Wang Z.-Y."/>
            <person name="Wassarman D.A."/>
            <person name="Weinstock G.M."/>
            <person name="Weissenbach J."/>
            <person name="Williams S.M."/>
            <person name="Woodage T."/>
            <person name="Worley K.C."/>
            <person name="Wu D."/>
            <person name="Yang S."/>
            <person name="Yao Q.A."/>
            <person name="Ye J."/>
            <person name="Yeh R.-F."/>
            <person name="Zaveri J.S."/>
            <person name="Zhan M."/>
            <person name="Zhang G."/>
            <person name="Zhao Q."/>
            <person name="Zheng L."/>
            <person name="Zheng X.H."/>
            <person name="Zhong F.N."/>
            <person name="Zhong W."/>
            <person name="Zhou X."/>
            <person name="Zhu S.C."/>
            <person name="Zhu X."/>
            <person name="Smith H.O."/>
            <person name="Gibbs R.A."/>
            <person name="Myers E.W."/>
            <person name="Rubin G.M."/>
            <person name="Venter J.C."/>
        </authorList>
    </citation>
    <scope>NUCLEOTIDE SEQUENCE [LARGE SCALE GENOMIC DNA]</scope>
    <source>
        <strain>Berkeley</strain>
    </source>
</reference>
<reference key="3">
    <citation type="journal article" date="2002" name="Genome Biol.">
        <title>Annotation of the Drosophila melanogaster euchromatic genome: a systematic review.</title>
        <authorList>
            <person name="Misra S."/>
            <person name="Crosby M.A."/>
            <person name="Mungall C.J."/>
            <person name="Matthews B.B."/>
            <person name="Campbell K.S."/>
            <person name="Hradecky P."/>
            <person name="Huang Y."/>
            <person name="Kaminker J.S."/>
            <person name="Millburn G.H."/>
            <person name="Prochnik S.E."/>
            <person name="Smith C.D."/>
            <person name="Tupy J.L."/>
            <person name="Whitfield E.J."/>
            <person name="Bayraktaroglu L."/>
            <person name="Berman B.P."/>
            <person name="Bettencourt B.R."/>
            <person name="Celniker S.E."/>
            <person name="de Grey A.D.N.J."/>
            <person name="Drysdale R.A."/>
            <person name="Harris N.L."/>
            <person name="Richter J."/>
            <person name="Russo S."/>
            <person name="Schroeder A.J."/>
            <person name="Shu S.Q."/>
            <person name="Stapleton M."/>
            <person name="Yamada C."/>
            <person name="Ashburner M."/>
            <person name="Gelbart W.M."/>
            <person name="Rubin G.M."/>
            <person name="Lewis S.E."/>
        </authorList>
    </citation>
    <scope>GENOME REANNOTATION</scope>
    <source>
        <strain>Berkeley</strain>
    </source>
</reference>
<reference key="4">
    <citation type="submission" date="2005-05" db="EMBL/GenBank/DDBJ databases">
        <authorList>
            <person name="Stapleton M."/>
            <person name="Carlson J.W."/>
            <person name="Chavez C."/>
            <person name="Frise E."/>
            <person name="George R.A."/>
            <person name="Pacleb J.M."/>
            <person name="Park S."/>
            <person name="Wan K.H."/>
            <person name="Yu C."/>
            <person name="Celniker S.E."/>
        </authorList>
    </citation>
    <scope>NUCLEOTIDE SEQUENCE [LARGE SCALE MRNA]</scope>
    <source>
        <strain>Berkeley</strain>
    </source>
</reference>
<evidence type="ECO:0000250" key="1"/>
<evidence type="ECO:0000256" key="2">
    <source>
        <dbReference type="SAM" id="MobiDB-lite"/>
    </source>
</evidence>
<evidence type="ECO:0000269" key="3">
    <source>
    </source>
</evidence>
<evidence type="ECO:0000305" key="4"/>
<proteinExistence type="evidence at transcript level"/>
<protein>
    <recommendedName>
        <fullName>RNA polymerase II transcriptional coactivator</fullName>
    </recommendedName>
    <alternativeName>
        <fullName>p11</fullName>
    </alternativeName>
</protein>
<organism>
    <name type="scientific">Drosophila melanogaster</name>
    <name type="common">Fruit fly</name>
    <dbReference type="NCBI Taxonomy" id="7227"/>
    <lineage>
        <taxon>Eukaryota</taxon>
        <taxon>Metazoa</taxon>
        <taxon>Ecdysozoa</taxon>
        <taxon>Arthropoda</taxon>
        <taxon>Hexapoda</taxon>
        <taxon>Insecta</taxon>
        <taxon>Pterygota</taxon>
        <taxon>Neoptera</taxon>
        <taxon>Endopterygota</taxon>
        <taxon>Diptera</taxon>
        <taxon>Brachycera</taxon>
        <taxon>Muscomorpha</taxon>
        <taxon>Ephydroidea</taxon>
        <taxon>Drosophilidae</taxon>
        <taxon>Drosophila</taxon>
        <taxon>Sophophora</taxon>
    </lineage>
</organism>
<keyword id="KW-0010">Activator</keyword>
<keyword id="KW-0238">DNA-binding</keyword>
<keyword id="KW-0539">Nucleus</keyword>
<keyword id="KW-1185">Reference proteome</keyword>
<keyword id="KW-0678">Repressor</keyword>
<keyword id="KW-0804">Transcription</keyword>
<keyword id="KW-0805">Transcription regulation</keyword>